<comment type="function">
    <text evidence="1">Formation of pseudouridine at positions 38, 39 and 40 in the anticodon stem and loop of transfer RNAs.</text>
</comment>
<comment type="catalytic activity">
    <reaction evidence="1">
        <text>uridine(38/39/40) in tRNA = pseudouridine(38/39/40) in tRNA</text>
        <dbReference type="Rhea" id="RHEA:22376"/>
        <dbReference type="Rhea" id="RHEA-COMP:10085"/>
        <dbReference type="Rhea" id="RHEA-COMP:10087"/>
        <dbReference type="ChEBI" id="CHEBI:65314"/>
        <dbReference type="ChEBI" id="CHEBI:65315"/>
        <dbReference type="EC" id="5.4.99.12"/>
    </reaction>
</comment>
<comment type="subunit">
    <text evidence="1">Homodimer.</text>
</comment>
<comment type="similarity">
    <text evidence="1">Belongs to the tRNA pseudouridine synthase TruA family.</text>
</comment>
<gene>
    <name evidence="1" type="primary">truA</name>
    <name type="ordered locus">tlr0107</name>
</gene>
<accession>Q8CWM6</accession>
<dbReference type="EC" id="5.4.99.12" evidence="1"/>
<dbReference type="EMBL" id="BA000039">
    <property type="protein sequence ID" value="BAC07660.1"/>
    <property type="molecule type" value="Genomic_DNA"/>
</dbReference>
<dbReference type="RefSeq" id="NP_680898.1">
    <property type="nucleotide sequence ID" value="NC_004113.1"/>
</dbReference>
<dbReference type="RefSeq" id="WP_011055962.1">
    <property type="nucleotide sequence ID" value="NC_004113.1"/>
</dbReference>
<dbReference type="SMR" id="Q8CWM6"/>
<dbReference type="STRING" id="197221.gene:10746685"/>
<dbReference type="EnsemblBacteria" id="BAC07660">
    <property type="protein sequence ID" value="BAC07660"/>
    <property type="gene ID" value="BAC07660"/>
</dbReference>
<dbReference type="KEGG" id="tel:tlr0107"/>
<dbReference type="PATRIC" id="fig|197221.4.peg.110"/>
<dbReference type="eggNOG" id="COG0101">
    <property type="taxonomic scope" value="Bacteria"/>
</dbReference>
<dbReference type="Proteomes" id="UP000000440">
    <property type="component" value="Chromosome"/>
</dbReference>
<dbReference type="GO" id="GO:0003723">
    <property type="term" value="F:RNA binding"/>
    <property type="evidence" value="ECO:0007669"/>
    <property type="project" value="InterPro"/>
</dbReference>
<dbReference type="GO" id="GO:0160147">
    <property type="term" value="F:tRNA pseudouridine(38-40) synthase activity"/>
    <property type="evidence" value="ECO:0007669"/>
    <property type="project" value="UniProtKB-EC"/>
</dbReference>
<dbReference type="GO" id="GO:0031119">
    <property type="term" value="P:tRNA pseudouridine synthesis"/>
    <property type="evidence" value="ECO:0007669"/>
    <property type="project" value="UniProtKB-UniRule"/>
</dbReference>
<dbReference type="CDD" id="cd02570">
    <property type="entry name" value="PseudoU_synth_EcTruA"/>
    <property type="match status" value="1"/>
</dbReference>
<dbReference type="FunFam" id="3.30.70.580:FF:000001">
    <property type="entry name" value="tRNA pseudouridine synthase A"/>
    <property type="match status" value="1"/>
</dbReference>
<dbReference type="Gene3D" id="3.30.70.660">
    <property type="entry name" value="Pseudouridine synthase I, catalytic domain, C-terminal subdomain"/>
    <property type="match status" value="1"/>
</dbReference>
<dbReference type="Gene3D" id="3.30.70.580">
    <property type="entry name" value="Pseudouridine synthase I, catalytic domain, N-terminal subdomain"/>
    <property type="match status" value="1"/>
</dbReference>
<dbReference type="HAMAP" id="MF_00171">
    <property type="entry name" value="TruA"/>
    <property type="match status" value="1"/>
</dbReference>
<dbReference type="InterPro" id="IPR020103">
    <property type="entry name" value="PsdUridine_synth_cat_dom_sf"/>
</dbReference>
<dbReference type="InterPro" id="IPR001406">
    <property type="entry name" value="PsdUridine_synth_TruA"/>
</dbReference>
<dbReference type="InterPro" id="IPR020097">
    <property type="entry name" value="PsdUridine_synth_TruA_a/b_dom"/>
</dbReference>
<dbReference type="InterPro" id="IPR020095">
    <property type="entry name" value="PsdUridine_synth_TruA_C"/>
</dbReference>
<dbReference type="InterPro" id="IPR020094">
    <property type="entry name" value="TruA/RsuA/RluB/E/F_N"/>
</dbReference>
<dbReference type="NCBIfam" id="TIGR00071">
    <property type="entry name" value="hisT_truA"/>
    <property type="match status" value="1"/>
</dbReference>
<dbReference type="PANTHER" id="PTHR11142">
    <property type="entry name" value="PSEUDOURIDYLATE SYNTHASE"/>
    <property type="match status" value="1"/>
</dbReference>
<dbReference type="PANTHER" id="PTHR11142:SF0">
    <property type="entry name" value="TRNA PSEUDOURIDINE SYNTHASE-LIKE 1"/>
    <property type="match status" value="1"/>
</dbReference>
<dbReference type="Pfam" id="PF01416">
    <property type="entry name" value="PseudoU_synth_1"/>
    <property type="match status" value="2"/>
</dbReference>
<dbReference type="PIRSF" id="PIRSF001430">
    <property type="entry name" value="tRNA_psdUrid_synth"/>
    <property type="match status" value="1"/>
</dbReference>
<dbReference type="SUPFAM" id="SSF55120">
    <property type="entry name" value="Pseudouridine synthase"/>
    <property type="match status" value="1"/>
</dbReference>
<reference key="1">
    <citation type="journal article" date="2002" name="DNA Res.">
        <title>Complete genome structure of the thermophilic cyanobacterium Thermosynechococcus elongatus BP-1.</title>
        <authorList>
            <person name="Nakamura Y."/>
            <person name="Kaneko T."/>
            <person name="Sato S."/>
            <person name="Ikeuchi M."/>
            <person name="Katoh H."/>
            <person name="Sasamoto S."/>
            <person name="Watanabe A."/>
            <person name="Iriguchi M."/>
            <person name="Kawashima K."/>
            <person name="Kimura T."/>
            <person name="Kishida Y."/>
            <person name="Kiyokawa C."/>
            <person name="Kohara M."/>
            <person name="Matsumoto M."/>
            <person name="Matsuno A."/>
            <person name="Nakazaki N."/>
            <person name="Shimpo S."/>
            <person name="Sugimoto M."/>
            <person name="Takeuchi C."/>
            <person name="Yamada M."/>
            <person name="Tabata S."/>
        </authorList>
    </citation>
    <scope>NUCLEOTIDE SEQUENCE [LARGE SCALE GENOMIC DNA]</scope>
    <source>
        <strain>NIES-2133 / IAM M-273 / BP-1</strain>
    </source>
</reference>
<protein>
    <recommendedName>
        <fullName evidence="1">tRNA pseudouridine synthase A</fullName>
        <ecNumber evidence="1">5.4.99.12</ecNumber>
    </recommendedName>
    <alternativeName>
        <fullName evidence="1">tRNA pseudouridine(38-40) synthase</fullName>
    </alternativeName>
    <alternativeName>
        <fullName evidence="1">tRNA pseudouridylate synthase I</fullName>
    </alternativeName>
    <alternativeName>
        <fullName evidence="1">tRNA-uridine isomerase I</fullName>
    </alternativeName>
</protein>
<evidence type="ECO:0000255" key="1">
    <source>
        <dbReference type="HAMAP-Rule" id="MF_00171"/>
    </source>
</evidence>
<feature type="chain" id="PRO_0000057470" description="tRNA pseudouridine synthase A">
    <location>
        <begin position="1"/>
        <end position="284"/>
    </location>
</feature>
<feature type="active site" description="Nucleophile" evidence="1">
    <location>
        <position position="62"/>
    </location>
</feature>
<feature type="binding site" evidence="1">
    <location>
        <position position="120"/>
    </location>
    <ligand>
        <name>substrate</name>
    </ligand>
</feature>
<name>TRUA_THEVB</name>
<sequence>MMTAIAPSQSGQRLALLIQYQGTHFHGWQRQVGQRTVQEVIEQAIASVVNHPVSVVAAGRTDTGVHAAGQVAHVTVNSPIPVHRWPGILNARLPADVVIRAAAAVPPDWHARFSALWRRYRYTLYTDPCPNIFLRPWTWHYYYAPLDVAKMAAVLQPLVGRHHLSAFHRSGSNRAHSWVEVQAVSCQRRGALVEIEVQASGFLYGMMRLLVGLLVQVGQGQRSPASFTEIWQQEQRHLVKYAAPPSGLCLLGVGYPESPFPLALCTEAMPQFQLASVCPELSIA</sequence>
<organism>
    <name type="scientific">Thermosynechococcus vestitus (strain NIES-2133 / IAM M-273 / BP-1)</name>
    <dbReference type="NCBI Taxonomy" id="197221"/>
    <lineage>
        <taxon>Bacteria</taxon>
        <taxon>Bacillati</taxon>
        <taxon>Cyanobacteriota</taxon>
        <taxon>Cyanophyceae</taxon>
        <taxon>Acaryochloridales</taxon>
        <taxon>Thermosynechococcaceae</taxon>
        <taxon>Thermosynechococcus</taxon>
    </lineage>
</organism>
<keyword id="KW-0413">Isomerase</keyword>
<keyword id="KW-1185">Reference proteome</keyword>
<keyword id="KW-0819">tRNA processing</keyword>
<proteinExistence type="inferred from homology"/>